<feature type="chain" id="PRO_0000121898" description="tRNA pseudouridine synthase B">
    <location>
        <begin position="1"/>
        <end position="314"/>
    </location>
</feature>
<feature type="active site" description="Nucleophile" evidence="1">
    <location>
        <position position="48"/>
    </location>
</feature>
<feature type="binding site" evidence="1">
    <location>
        <position position="43"/>
    </location>
    <ligand>
        <name>substrate</name>
    </ligand>
</feature>
<feature type="binding site" evidence="1">
    <location>
        <position position="76"/>
    </location>
    <ligand>
        <name>substrate</name>
    </ligand>
</feature>
<feature type="binding site" evidence="1">
    <location>
        <position position="179"/>
    </location>
    <ligand>
        <name>substrate</name>
    </ligand>
</feature>
<feature type="binding site" evidence="1">
    <location>
        <position position="200"/>
    </location>
    <ligand>
        <name>substrate</name>
    </ligand>
</feature>
<protein>
    <recommendedName>
        <fullName evidence="1">tRNA pseudouridine synthase B</fullName>
        <ecNumber evidence="1">5.4.99.25</ecNumber>
    </recommendedName>
    <alternativeName>
        <fullName evidence="1">tRNA pseudouridine(55) synthase</fullName>
        <shortName evidence="1">Psi55 synthase</shortName>
    </alternativeName>
    <alternativeName>
        <fullName evidence="1">tRNA pseudouridylate synthase</fullName>
    </alternativeName>
    <alternativeName>
        <fullName evidence="1">tRNA-uridine isomerase</fullName>
    </alternativeName>
</protein>
<reference key="1">
    <citation type="journal article" date="2001" name="Nature">
        <title>Complete genome sequence of a multiple drug resistant Salmonella enterica serovar Typhi CT18.</title>
        <authorList>
            <person name="Parkhill J."/>
            <person name="Dougan G."/>
            <person name="James K.D."/>
            <person name="Thomson N.R."/>
            <person name="Pickard D."/>
            <person name="Wain J."/>
            <person name="Churcher C.M."/>
            <person name="Mungall K.L."/>
            <person name="Bentley S.D."/>
            <person name="Holden M.T.G."/>
            <person name="Sebaihia M."/>
            <person name="Baker S."/>
            <person name="Basham D."/>
            <person name="Brooks K."/>
            <person name="Chillingworth T."/>
            <person name="Connerton P."/>
            <person name="Cronin A."/>
            <person name="Davis P."/>
            <person name="Davies R.M."/>
            <person name="Dowd L."/>
            <person name="White N."/>
            <person name="Farrar J."/>
            <person name="Feltwell T."/>
            <person name="Hamlin N."/>
            <person name="Haque A."/>
            <person name="Hien T.T."/>
            <person name="Holroyd S."/>
            <person name="Jagels K."/>
            <person name="Krogh A."/>
            <person name="Larsen T.S."/>
            <person name="Leather S."/>
            <person name="Moule S."/>
            <person name="O'Gaora P."/>
            <person name="Parry C."/>
            <person name="Quail M.A."/>
            <person name="Rutherford K.M."/>
            <person name="Simmonds M."/>
            <person name="Skelton J."/>
            <person name="Stevens K."/>
            <person name="Whitehead S."/>
            <person name="Barrell B.G."/>
        </authorList>
    </citation>
    <scope>NUCLEOTIDE SEQUENCE [LARGE SCALE GENOMIC DNA]</scope>
    <source>
        <strain>CT18</strain>
    </source>
</reference>
<reference key="2">
    <citation type="journal article" date="2003" name="J. Bacteriol.">
        <title>Comparative genomics of Salmonella enterica serovar Typhi strains Ty2 and CT18.</title>
        <authorList>
            <person name="Deng W."/>
            <person name="Liou S.-R."/>
            <person name="Plunkett G. III"/>
            <person name="Mayhew G.F."/>
            <person name="Rose D.J."/>
            <person name="Burland V."/>
            <person name="Kodoyianni V."/>
            <person name="Schwartz D.C."/>
            <person name="Blattner F.R."/>
        </authorList>
    </citation>
    <scope>NUCLEOTIDE SEQUENCE [LARGE SCALE GENOMIC DNA]</scope>
    <source>
        <strain>ATCC 700931 / Ty2</strain>
    </source>
</reference>
<keyword id="KW-0413">Isomerase</keyword>
<keyword id="KW-0819">tRNA processing</keyword>
<sequence length="314" mass="35070">MSRPRRRGRDIHGVLLLDKPQGMSSNDVLQKVKRIYNANRAGHTGALDPLATGMLPICLGEATKFSQYLLDSDKRYRVIARLGQRTDTSDADGQIVQERPVTFSAEQLASALETFRGDIEQIPSMYSALKYQGRKLYEYARQGIEVPREARPITVYELLFIRHEGNELELEVHCSKGTYIRTIIDDLGEKLGCGAHVTYLRRLTVSKYPVDRMVTLEHLQTLVAQAEQQGVPAAQLLDPLLMPMDSPASDYPVVNLPLTSSVYFKNGNPVRTTGAPLKGLVRVTEGEDDKFIGMGEIDDEGRVAPRRLVVEYPA</sequence>
<proteinExistence type="inferred from homology"/>
<organism>
    <name type="scientific">Salmonella typhi</name>
    <dbReference type="NCBI Taxonomy" id="90370"/>
    <lineage>
        <taxon>Bacteria</taxon>
        <taxon>Pseudomonadati</taxon>
        <taxon>Pseudomonadota</taxon>
        <taxon>Gammaproteobacteria</taxon>
        <taxon>Enterobacterales</taxon>
        <taxon>Enterobacteriaceae</taxon>
        <taxon>Salmonella</taxon>
    </lineage>
</organism>
<accession>Q8Z3H9</accession>
<gene>
    <name evidence="1" type="primary">truB</name>
    <name type="ordered locus">STY3465</name>
    <name type="ordered locus">t3202</name>
</gene>
<dbReference type="EC" id="5.4.99.25" evidence="1"/>
<dbReference type="EMBL" id="AL513382">
    <property type="protein sequence ID" value="CAD07804.1"/>
    <property type="molecule type" value="Genomic_DNA"/>
</dbReference>
<dbReference type="EMBL" id="AE014613">
    <property type="protein sequence ID" value="AAO70740.1"/>
    <property type="molecule type" value="Genomic_DNA"/>
</dbReference>
<dbReference type="RefSeq" id="NP_457666.1">
    <property type="nucleotide sequence ID" value="NC_003198.1"/>
</dbReference>
<dbReference type="RefSeq" id="WP_000089682.1">
    <property type="nucleotide sequence ID" value="NZ_WSUR01000003.1"/>
</dbReference>
<dbReference type="SMR" id="Q8Z3H9"/>
<dbReference type="STRING" id="220341.gene:17587315"/>
<dbReference type="KEGG" id="stt:t3202"/>
<dbReference type="KEGG" id="sty:STY3465"/>
<dbReference type="PATRIC" id="fig|220341.7.peg.3527"/>
<dbReference type="eggNOG" id="COG0130">
    <property type="taxonomic scope" value="Bacteria"/>
</dbReference>
<dbReference type="HOGENOM" id="CLU_032087_0_3_6"/>
<dbReference type="OMA" id="VDKPSGF"/>
<dbReference type="OrthoDB" id="9802309at2"/>
<dbReference type="Proteomes" id="UP000000541">
    <property type="component" value="Chromosome"/>
</dbReference>
<dbReference type="Proteomes" id="UP000002670">
    <property type="component" value="Chromosome"/>
</dbReference>
<dbReference type="GO" id="GO:0003723">
    <property type="term" value="F:RNA binding"/>
    <property type="evidence" value="ECO:0007669"/>
    <property type="project" value="InterPro"/>
</dbReference>
<dbReference type="GO" id="GO:0160148">
    <property type="term" value="F:tRNA pseudouridine(55) synthase activity"/>
    <property type="evidence" value="ECO:0007669"/>
    <property type="project" value="UniProtKB-EC"/>
</dbReference>
<dbReference type="GO" id="GO:1990481">
    <property type="term" value="P:mRNA pseudouridine synthesis"/>
    <property type="evidence" value="ECO:0007669"/>
    <property type="project" value="TreeGrafter"/>
</dbReference>
<dbReference type="GO" id="GO:0031119">
    <property type="term" value="P:tRNA pseudouridine synthesis"/>
    <property type="evidence" value="ECO:0007669"/>
    <property type="project" value="UniProtKB-UniRule"/>
</dbReference>
<dbReference type="CDD" id="cd02573">
    <property type="entry name" value="PseudoU_synth_EcTruB"/>
    <property type="match status" value="1"/>
</dbReference>
<dbReference type="CDD" id="cd21152">
    <property type="entry name" value="PUA_TruB_bacterial"/>
    <property type="match status" value="1"/>
</dbReference>
<dbReference type="FunFam" id="2.30.130.10:FF:000004">
    <property type="entry name" value="tRNA pseudouridine synthase B"/>
    <property type="match status" value="1"/>
</dbReference>
<dbReference type="FunFam" id="3.30.2350.10:FF:000003">
    <property type="entry name" value="tRNA pseudouridine synthase B"/>
    <property type="match status" value="1"/>
</dbReference>
<dbReference type="Gene3D" id="3.30.2350.10">
    <property type="entry name" value="Pseudouridine synthase"/>
    <property type="match status" value="1"/>
</dbReference>
<dbReference type="Gene3D" id="2.30.130.10">
    <property type="entry name" value="PUA domain"/>
    <property type="match status" value="1"/>
</dbReference>
<dbReference type="HAMAP" id="MF_01080">
    <property type="entry name" value="TruB_bact"/>
    <property type="match status" value="1"/>
</dbReference>
<dbReference type="InterPro" id="IPR020103">
    <property type="entry name" value="PsdUridine_synth_cat_dom_sf"/>
</dbReference>
<dbReference type="InterPro" id="IPR002501">
    <property type="entry name" value="PsdUridine_synth_N"/>
</dbReference>
<dbReference type="InterPro" id="IPR015947">
    <property type="entry name" value="PUA-like_sf"/>
</dbReference>
<dbReference type="InterPro" id="IPR036974">
    <property type="entry name" value="PUA_sf"/>
</dbReference>
<dbReference type="InterPro" id="IPR014780">
    <property type="entry name" value="tRNA_psdUridine_synth_TruB"/>
</dbReference>
<dbReference type="InterPro" id="IPR015240">
    <property type="entry name" value="tRNA_sdUridine_synth_fam1_C"/>
</dbReference>
<dbReference type="InterPro" id="IPR032819">
    <property type="entry name" value="TruB_C"/>
</dbReference>
<dbReference type="NCBIfam" id="TIGR00431">
    <property type="entry name" value="TruB"/>
    <property type="match status" value="1"/>
</dbReference>
<dbReference type="PANTHER" id="PTHR13767:SF2">
    <property type="entry name" value="PSEUDOURIDYLATE SYNTHASE TRUB1"/>
    <property type="match status" value="1"/>
</dbReference>
<dbReference type="PANTHER" id="PTHR13767">
    <property type="entry name" value="TRNA-PSEUDOURIDINE SYNTHASE"/>
    <property type="match status" value="1"/>
</dbReference>
<dbReference type="Pfam" id="PF09157">
    <property type="entry name" value="TruB-C_2"/>
    <property type="match status" value="1"/>
</dbReference>
<dbReference type="Pfam" id="PF16198">
    <property type="entry name" value="TruB_C_2"/>
    <property type="match status" value="1"/>
</dbReference>
<dbReference type="Pfam" id="PF01509">
    <property type="entry name" value="TruB_N"/>
    <property type="match status" value="1"/>
</dbReference>
<dbReference type="SUPFAM" id="SSF55120">
    <property type="entry name" value="Pseudouridine synthase"/>
    <property type="match status" value="1"/>
</dbReference>
<dbReference type="SUPFAM" id="SSF88697">
    <property type="entry name" value="PUA domain-like"/>
    <property type="match status" value="1"/>
</dbReference>
<name>TRUB_SALTI</name>
<evidence type="ECO:0000255" key="1">
    <source>
        <dbReference type="HAMAP-Rule" id="MF_01080"/>
    </source>
</evidence>
<comment type="function">
    <text evidence="1">Responsible for synthesis of pseudouridine from uracil-55 in the psi GC loop of transfer RNAs.</text>
</comment>
<comment type="catalytic activity">
    <reaction evidence="1">
        <text>uridine(55) in tRNA = pseudouridine(55) in tRNA</text>
        <dbReference type="Rhea" id="RHEA:42532"/>
        <dbReference type="Rhea" id="RHEA-COMP:10101"/>
        <dbReference type="Rhea" id="RHEA-COMP:10102"/>
        <dbReference type="ChEBI" id="CHEBI:65314"/>
        <dbReference type="ChEBI" id="CHEBI:65315"/>
        <dbReference type="EC" id="5.4.99.25"/>
    </reaction>
</comment>
<comment type="similarity">
    <text evidence="1">Belongs to the pseudouridine synthase TruB family. Type 1 subfamily.</text>
</comment>